<feature type="chain" id="PRO_0000336648" description="Sec-independent protein translocase protein TatA">
    <location>
        <begin position="1"/>
        <end position="69"/>
    </location>
</feature>
<feature type="transmembrane region" description="Helical" evidence="1">
    <location>
        <begin position="1"/>
        <end position="21"/>
    </location>
</feature>
<sequence length="69" mass="7655">MMPGPFELIIILVIVLLLFGGKRLKDIGGDLGNAIKGFKKAMKESTDSINNKDDIVEAKIIKKEIKQEK</sequence>
<keyword id="KW-0997">Cell inner membrane</keyword>
<keyword id="KW-1003">Cell membrane</keyword>
<keyword id="KW-0472">Membrane</keyword>
<keyword id="KW-0653">Protein transport</keyword>
<keyword id="KW-1185">Reference proteome</keyword>
<keyword id="KW-0811">Translocation</keyword>
<keyword id="KW-0812">Transmembrane</keyword>
<keyword id="KW-1133">Transmembrane helix</keyword>
<keyword id="KW-0813">Transport</keyword>
<gene>
    <name evidence="1" type="primary">tatA</name>
    <name type="ordered locus">COSY_0273</name>
</gene>
<reference key="1">
    <citation type="journal article" date="2007" name="Curr. Biol.">
        <title>Reduced genome of the thioautotrophic intracellular symbiont in a deep-sea clam, Calyptogena okutanii.</title>
        <authorList>
            <person name="Kuwahara H."/>
            <person name="Yoshida T."/>
            <person name="Takaki Y."/>
            <person name="Shimamura S."/>
            <person name="Nishi S."/>
            <person name="Harada M."/>
            <person name="Matsuyama K."/>
            <person name="Takishita K."/>
            <person name="Kawato M."/>
            <person name="Uematsu K."/>
            <person name="Fujiwara Y."/>
            <person name="Sato T."/>
            <person name="Kato C."/>
            <person name="Kitagawa M."/>
            <person name="Kato I."/>
            <person name="Maruyama T."/>
        </authorList>
    </citation>
    <scope>NUCLEOTIDE SEQUENCE [LARGE SCALE GENOMIC DNA]</scope>
    <source>
        <strain>HA</strain>
    </source>
</reference>
<dbReference type="EMBL" id="AP009247">
    <property type="protein sequence ID" value="BAF61402.1"/>
    <property type="molecule type" value="Genomic_DNA"/>
</dbReference>
<dbReference type="RefSeq" id="WP_011929672.1">
    <property type="nucleotide sequence ID" value="NC_009465.1"/>
</dbReference>
<dbReference type="SMR" id="A5CXC5"/>
<dbReference type="STRING" id="412965.COSY_0273"/>
<dbReference type="KEGG" id="vok:COSY_0273"/>
<dbReference type="eggNOG" id="COG1826">
    <property type="taxonomic scope" value="Bacteria"/>
</dbReference>
<dbReference type="HOGENOM" id="CLU_086034_5_3_6"/>
<dbReference type="OrthoDB" id="7066617at2"/>
<dbReference type="Proteomes" id="UP000000247">
    <property type="component" value="Chromosome"/>
</dbReference>
<dbReference type="GO" id="GO:0033281">
    <property type="term" value="C:TAT protein transport complex"/>
    <property type="evidence" value="ECO:0007669"/>
    <property type="project" value="UniProtKB-UniRule"/>
</dbReference>
<dbReference type="GO" id="GO:0008320">
    <property type="term" value="F:protein transmembrane transporter activity"/>
    <property type="evidence" value="ECO:0007669"/>
    <property type="project" value="UniProtKB-UniRule"/>
</dbReference>
<dbReference type="GO" id="GO:0043953">
    <property type="term" value="P:protein transport by the Tat complex"/>
    <property type="evidence" value="ECO:0007669"/>
    <property type="project" value="UniProtKB-UniRule"/>
</dbReference>
<dbReference type="Gene3D" id="1.20.5.3310">
    <property type="match status" value="1"/>
</dbReference>
<dbReference type="HAMAP" id="MF_00236">
    <property type="entry name" value="TatA_E"/>
    <property type="match status" value="1"/>
</dbReference>
<dbReference type="InterPro" id="IPR003369">
    <property type="entry name" value="TatA/B/E"/>
</dbReference>
<dbReference type="InterPro" id="IPR006312">
    <property type="entry name" value="TatA/E"/>
</dbReference>
<dbReference type="NCBIfam" id="TIGR01411">
    <property type="entry name" value="tatAE"/>
    <property type="match status" value="1"/>
</dbReference>
<dbReference type="PANTHER" id="PTHR42982">
    <property type="entry name" value="SEC-INDEPENDENT PROTEIN TRANSLOCASE PROTEIN TATA"/>
    <property type="match status" value="1"/>
</dbReference>
<dbReference type="PANTHER" id="PTHR42982:SF1">
    <property type="entry name" value="SEC-INDEPENDENT PROTEIN TRANSLOCASE PROTEIN TATA"/>
    <property type="match status" value="1"/>
</dbReference>
<dbReference type="Pfam" id="PF02416">
    <property type="entry name" value="TatA_B_E"/>
    <property type="match status" value="1"/>
</dbReference>
<protein>
    <recommendedName>
        <fullName evidence="1">Sec-independent protein translocase protein TatA</fullName>
    </recommendedName>
</protein>
<comment type="function">
    <text evidence="1">Part of the twin-arginine translocation (Tat) system that transports large folded proteins containing a characteristic twin-arginine motif in their signal peptide across membranes. TatA could form the protein-conducting channel of the Tat system.</text>
</comment>
<comment type="subunit">
    <text evidence="1">The Tat system comprises two distinct complexes: a TatABC complex, containing multiple copies of TatA, TatB and TatC subunits, and a separate TatA complex, containing only TatA subunits. Substrates initially bind to the TatABC complex, which probably triggers association of the separate TatA complex to form the active translocon.</text>
</comment>
<comment type="subcellular location">
    <subcellularLocation>
        <location evidence="1">Cell inner membrane</location>
        <topology evidence="1">Single-pass membrane protein</topology>
    </subcellularLocation>
</comment>
<comment type="similarity">
    <text evidence="1">Belongs to the TatA/E family.</text>
</comment>
<accession>A5CXC5</accession>
<organism>
    <name type="scientific">Vesicomyosocius okutanii subsp. Calyptogena okutanii (strain HA)</name>
    <dbReference type="NCBI Taxonomy" id="412965"/>
    <lineage>
        <taxon>Bacteria</taxon>
        <taxon>Pseudomonadati</taxon>
        <taxon>Pseudomonadota</taxon>
        <taxon>Gammaproteobacteria</taxon>
        <taxon>Candidatus Pseudothioglobaceae</taxon>
        <taxon>Candidatus Vesicomyosocius</taxon>
    </lineage>
</organism>
<proteinExistence type="inferred from homology"/>
<evidence type="ECO:0000255" key="1">
    <source>
        <dbReference type="HAMAP-Rule" id="MF_00236"/>
    </source>
</evidence>
<name>TATA_VESOH</name>